<organism>
    <name type="scientific">Acinetobacter baumannii (strain AB307-0294)</name>
    <dbReference type="NCBI Taxonomy" id="557600"/>
    <lineage>
        <taxon>Bacteria</taxon>
        <taxon>Pseudomonadati</taxon>
        <taxon>Pseudomonadota</taxon>
        <taxon>Gammaproteobacteria</taxon>
        <taxon>Moraxellales</taxon>
        <taxon>Moraxellaceae</taxon>
        <taxon>Acinetobacter</taxon>
        <taxon>Acinetobacter calcoaceticus/baumannii complex</taxon>
    </lineage>
</organism>
<name>LSPA_ACIB3</name>
<feature type="chain" id="PRO_1000190785" description="Lipoprotein signal peptidase">
    <location>
        <begin position="1"/>
        <end position="176"/>
    </location>
</feature>
<feature type="transmembrane region" description="Helical" evidence="1">
    <location>
        <begin position="10"/>
        <end position="30"/>
    </location>
</feature>
<feature type="transmembrane region" description="Helical" evidence="1">
    <location>
        <begin position="48"/>
        <end position="68"/>
    </location>
</feature>
<feature type="transmembrane region" description="Helical" evidence="1">
    <location>
        <begin position="78"/>
        <end position="98"/>
    </location>
</feature>
<feature type="transmembrane region" description="Helical" evidence="1">
    <location>
        <begin position="102"/>
        <end position="122"/>
    </location>
</feature>
<feature type="transmembrane region" description="Helical" evidence="1">
    <location>
        <begin position="141"/>
        <end position="161"/>
    </location>
</feature>
<feature type="active site" evidence="1">
    <location>
        <position position="131"/>
    </location>
</feature>
<feature type="active site" evidence="1">
    <location>
        <position position="149"/>
    </location>
</feature>
<keyword id="KW-0064">Aspartyl protease</keyword>
<keyword id="KW-0997">Cell inner membrane</keyword>
<keyword id="KW-1003">Cell membrane</keyword>
<keyword id="KW-0378">Hydrolase</keyword>
<keyword id="KW-0472">Membrane</keyword>
<keyword id="KW-0645">Protease</keyword>
<keyword id="KW-0812">Transmembrane</keyword>
<keyword id="KW-1133">Transmembrane helix</keyword>
<gene>
    <name evidence="1" type="primary">lspA</name>
    <name type="ordered locus">ABBFA_003491</name>
</gene>
<comment type="function">
    <text evidence="1">This protein specifically catalyzes the removal of signal peptides from prolipoproteins.</text>
</comment>
<comment type="catalytic activity">
    <reaction evidence="1">
        <text>Release of signal peptides from bacterial membrane prolipoproteins. Hydrolyzes -Xaa-Yaa-Zaa-|-(S,diacylglyceryl)Cys-, in which Xaa is hydrophobic (preferably Leu), and Yaa (Ala or Ser) and Zaa (Gly or Ala) have small, neutral side chains.</text>
        <dbReference type="EC" id="3.4.23.36"/>
    </reaction>
</comment>
<comment type="pathway">
    <text evidence="1">Protein modification; lipoprotein biosynthesis (signal peptide cleavage).</text>
</comment>
<comment type="subcellular location">
    <subcellularLocation>
        <location evidence="1">Cell inner membrane</location>
        <topology evidence="1">Multi-pass membrane protein</topology>
    </subcellularLocation>
</comment>
<comment type="similarity">
    <text evidence="1">Belongs to the peptidase A8 family.</text>
</comment>
<reference key="1">
    <citation type="journal article" date="2008" name="J. Bacteriol.">
        <title>Comparative genome sequence analysis of multidrug-resistant Acinetobacter baumannii.</title>
        <authorList>
            <person name="Adams M.D."/>
            <person name="Goglin K."/>
            <person name="Molyneaux N."/>
            <person name="Hujer K.M."/>
            <person name="Lavender H."/>
            <person name="Jamison J.J."/>
            <person name="MacDonald I.J."/>
            <person name="Martin K.M."/>
            <person name="Russo T."/>
            <person name="Campagnari A.A."/>
            <person name="Hujer A.M."/>
            <person name="Bonomo R.A."/>
            <person name="Gill S.R."/>
        </authorList>
    </citation>
    <scope>NUCLEOTIDE SEQUENCE [LARGE SCALE GENOMIC DNA]</scope>
    <source>
        <strain>AB307-0294</strain>
    </source>
</reference>
<evidence type="ECO:0000255" key="1">
    <source>
        <dbReference type="HAMAP-Rule" id="MF_00161"/>
    </source>
</evidence>
<protein>
    <recommendedName>
        <fullName evidence="1">Lipoprotein signal peptidase</fullName>
        <ecNumber evidence="1">3.4.23.36</ecNumber>
    </recommendedName>
    <alternativeName>
        <fullName evidence="1">Prolipoprotein signal peptidase</fullName>
    </alternativeName>
    <alternativeName>
        <fullName evidence="1">Signal peptidase II</fullName>
        <shortName evidence="1">SPase II</shortName>
    </alternativeName>
</protein>
<accession>B7H305</accession>
<dbReference type="EC" id="3.4.23.36" evidence="1"/>
<dbReference type="EMBL" id="CP001172">
    <property type="protein sequence ID" value="ACJ58527.1"/>
    <property type="molecule type" value="Genomic_DNA"/>
</dbReference>
<dbReference type="RefSeq" id="WP_001133879.1">
    <property type="nucleotide sequence ID" value="NZ_CP001172.1"/>
</dbReference>
<dbReference type="SMR" id="B7H305"/>
<dbReference type="GeneID" id="92891982"/>
<dbReference type="HOGENOM" id="CLU_083252_4_0_6"/>
<dbReference type="UniPathway" id="UPA00665"/>
<dbReference type="Proteomes" id="UP000006924">
    <property type="component" value="Chromosome"/>
</dbReference>
<dbReference type="GO" id="GO:0005886">
    <property type="term" value="C:plasma membrane"/>
    <property type="evidence" value="ECO:0007669"/>
    <property type="project" value="UniProtKB-SubCell"/>
</dbReference>
<dbReference type="GO" id="GO:0004190">
    <property type="term" value="F:aspartic-type endopeptidase activity"/>
    <property type="evidence" value="ECO:0007669"/>
    <property type="project" value="UniProtKB-UniRule"/>
</dbReference>
<dbReference type="GO" id="GO:0006508">
    <property type="term" value="P:proteolysis"/>
    <property type="evidence" value="ECO:0007669"/>
    <property type="project" value="UniProtKB-KW"/>
</dbReference>
<dbReference type="HAMAP" id="MF_00161">
    <property type="entry name" value="LspA"/>
    <property type="match status" value="1"/>
</dbReference>
<dbReference type="InterPro" id="IPR001872">
    <property type="entry name" value="Peptidase_A8"/>
</dbReference>
<dbReference type="NCBIfam" id="TIGR00077">
    <property type="entry name" value="lspA"/>
    <property type="match status" value="1"/>
</dbReference>
<dbReference type="PANTHER" id="PTHR33695">
    <property type="entry name" value="LIPOPROTEIN SIGNAL PEPTIDASE"/>
    <property type="match status" value="1"/>
</dbReference>
<dbReference type="PANTHER" id="PTHR33695:SF1">
    <property type="entry name" value="LIPOPROTEIN SIGNAL PEPTIDASE"/>
    <property type="match status" value="1"/>
</dbReference>
<dbReference type="Pfam" id="PF01252">
    <property type="entry name" value="Peptidase_A8"/>
    <property type="match status" value="1"/>
</dbReference>
<dbReference type="PRINTS" id="PR00781">
    <property type="entry name" value="LIPOSIGPTASE"/>
</dbReference>
<dbReference type="PROSITE" id="PS00855">
    <property type="entry name" value="SPASE_II"/>
    <property type="match status" value="1"/>
</dbReference>
<proteinExistence type="inferred from homology"/>
<sequence length="176" mass="19911">MPNSQAKKGLFQFYPHNLIWLGLSVLAIVLDQWTKWIASTHLNYADPVPVLPFLNWTLLHNYGAAFSFLSDAGGWQRYFFTSLAGLVSILFVFWLLRMPKKMVVLPVAIALILGGALGNLIDRITLGYVVDFIHVYYQNHHFPAFNIADSAITLGTILLLIDTFFLEKQRPKNSDA</sequence>